<sequence>MFAIIKTGGKQIKVEAGMEIFIEKLEGELNTEVTFEEVLMVDGKFGSPLVQGAKVTGTIVKQGKGKKIRVVRYHPKKNVNKVYGHRQPYTKVKIEKIEA</sequence>
<gene>
    <name evidence="1" type="primary">rplU</name>
    <name type="ordered locus">Mfl441</name>
</gene>
<accession>Q6F123</accession>
<keyword id="KW-1185">Reference proteome</keyword>
<keyword id="KW-0687">Ribonucleoprotein</keyword>
<keyword id="KW-0689">Ribosomal protein</keyword>
<keyword id="KW-0694">RNA-binding</keyword>
<keyword id="KW-0699">rRNA-binding</keyword>
<name>RL21_MESFL</name>
<proteinExistence type="inferred from homology"/>
<reference key="1">
    <citation type="submission" date="2004-06" db="EMBL/GenBank/DDBJ databases">
        <authorList>
            <person name="Birren B.W."/>
            <person name="Stange-Thomann N."/>
            <person name="Hafez N."/>
            <person name="DeCaprio D."/>
            <person name="Fisher S."/>
            <person name="Butler J."/>
            <person name="Elkins T."/>
            <person name="Kodira C.D."/>
            <person name="Major J."/>
            <person name="Wang S."/>
            <person name="Nicol R."/>
            <person name="Nusbaum C."/>
        </authorList>
    </citation>
    <scope>NUCLEOTIDE SEQUENCE [LARGE SCALE GENOMIC DNA]</scope>
    <source>
        <strain>ATCC 33453 / NBRC 100688 / NCTC 11704 / L1</strain>
    </source>
</reference>
<organism>
    <name type="scientific">Mesoplasma florum (strain ATCC 33453 / NBRC 100688 / NCTC 11704 / L1)</name>
    <name type="common">Acholeplasma florum</name>
    <dbReference type="NCBI Taxonomy" id="265311"/>
    <lineage>
        <taxon>Bacteria</taxon>
        <taxon>Bacillati</taxon>
        <taxon>Mycoplasmatota</taxon>
        <taxon>Mollicutes</taxon>
        <taxon>Entomoplasmatales</taxon>
        <taxon>Entomoplasmataceae</taxon>
        <taxon>Mesoplasma</taxon>
    </lineage>
</organism>
<feature type="chain" id="PRO_0000269341" description="Large ribosomal subunit protein bL21">
    <location>
        <begin position="1"/>
        <end position="99"/>
    </location>
</feature>
<comment type="function">
    <text evidence="1">This protein binds to 23S rRNA in the presence of protein L20.</text>
</comment>
<comment type="subunit">
    <text evidence="1">Part of the 50S ribosomal subunit. Contacts protein L20.</text>
</comment>
<comment type="similarity">
    <text evidence="1">Belongs to the bacterial ribosomal protein bL21 family.</text>
</comment>
<protein>
    <recommendedName>
        <fullName evidence="1">Large ribosomal subunit protein bL21</fullName>
    </recommendedName>
    <alternativeName>
        <fullName evidence="2">50S ribosomal protein L21</fullName>
    </alternativeName>
</protein>
<dbReference type="EMBL" id="AE017263">
    <property type="protein sequence ID" value="AAT75800.1"/>
    <property type="molecule type" value="Genomic_DNA"/>
</dbReference>
<dbReference type="RefSeq" id="WP_011183340.1">
    <property type="nucleotide sequence ID" value="NC_006055.1"/>
</dbReference>
<dbReference type="RefSeq" id="YP_053684.1">
    <property type="nucleotide sequence ID" value="NC_006055.1"/>
</dbReference>
<dbReference type="SMR" id="Q6F123"/>
<dbReference type="STRING" id="265311.Mfl441"/>
<dbReference type="PaxDb" id="265311-Mfl441"/>
<dbReference type="EnsemblBacteria" id="AAT75800">
    <property type="protein sequence ID" value="AAT75800"/>
    <property type="gene ID" value="Mfl441"/>
</dbReference>
<dbReference type="GeneID" id="2897593"/>
<dbReference type="KEGG" id="mfl:Mfl441"/>
<dbReference type="PATRIC" id="fig|265311.5.peg.442"/>
<dbReference type="eggNOG" id="COG0261">
    <property type="taxonomic scope" value="Bacteria"/>
</dbReference>
<dbReference type="HOGENOM" id="CLU_061463_3_1_14"/>
<dbReference type="OrthoDB" id="9813334at2"/>
<dbReference type="Proteomes" id="UP000006647">
    <property type="component" value="Chromosome"/>
</dbReference>
<dbReference type="GO" id="GO:0005737">
    <property type="term" value="C:cytoplasm"/>
    <property type="evidence" value="ECO:0007669"/>
    <property type="project" value="UniProtKB-ARBA"/>
</dbReference>
<dbReference type="GO" id="GO:1990904">
    <property type="term" value="C:ribonucleoprotein complex"/>
    <property type="evidence" value="ECO:0007669"/>
    <property type="project" value="UniProtKB-KW"/>
</dbReference>
<dbReference type="GO" id="GO:0005840">
    <property type="term" value="C:ribosome"/>
    <property type="evidence" value="ECO:0007669"/>
    <property type="project" value="UniProtKB-KW"/>
</dbReference>
<dbReference type="GO" id="GO:0019843">
    <property type="term" value="F:rRNA binding"/>
    <property type="evidence" value="ECO:0007669"/>
    <property type="project" value="UniProtKB-UniRule"/>
</dbReference>
<dbReference type="GO" id="GO:0003735">
    <property type="term" value="F:structural constituent of ribosome"/>
    <property type="evidence" value="ECO:0007669"/>
    <property type="project" value="InterPro"/>
</dbReference>
<dbReference type="GO" id="GO:0006412">
    <property type="term" value="P:translation"/>
    <property type="evidence" value="ECO:0007669"/>
    <property type="project" value="UniProtKB-UniRule"/>
</dbReference>
<dbReference type="HAMAP" id="MF_01363">
    <property type="entry name" value="Ribosomal_bL21"/>
    <property type="match status" value="1"/>
</dbReference>
<dbReference type="InterPro" id="IPR028909">
    <property type="entry name" value="bL21-like"/>
</dbReference>
<dbReference type="InterPro" id="IPR036164">
    <property type="entry name" value="bL21-like_sf"/>
</dbReference>
<dbReference type="InterPro" id="IPR001787">
    <property type="entry name" value="Ribosomal_bL21"/>
</dbReference>
<dbReference type="InterPro" id="IPR018258">
    <property type="entry name" value="Ribosomal_bL21_CS"/>
</dbReference>
<dbReference type="NCBIfam" id="TIGR00061">
    <property type="entry name" value="L21"/>
    <property type="match status" value="1"/>
</dbReference>
<dbReference type="PANTHER" id="PTHR21349">
    <property type="entry name" value="50S RIBOSOMAL PROTEIN L21"/>
    <property type="match status" value="1"/>
</dbReference>
<dbReference type="PANTHER" id="PTHR21349:SF0">
    <property type="entry name" value="LARGE RIBOSOMAL SUBUNIT PROTEIN BL21M"/>
    <property type="match status" value="1"/>
</dbReference>
<dbReference type="Pfam" id="PF00829">
    <property type="entry name" value="Ribosomal_L21p"/>
    <property type="match status" value="1"/>
</dbReference>
<dbReference type="SUPFAM" id="SSF141091">
    <property type="entry name" value="L21p-like"/>
    <property type="match status" value="1"/>
</dbReference>
<dbReference type="PROSITE" id="PS01169">
    <property type="entry name" value="RIBOSOMAL_L21"/>
    <property type="match status" value="1"/>
</dbReference>
<evidence type="ECO:0000255" key="1">
    <source>
        <dbReference type="HAMAP-Rule" id="MF_01363"/>
    </source>
</evidence>
<evidence type="ECO:0000305" key="2"/>